<comment type="function">
    <text evidence="1">Component of the cytochrome b6-f complex, which mediates electron transfer between photosystem II (PSII) and photosystem I (PSI), cyclic electron flow around PSI, and state transitions.</text>
</comment>
<comment type="subunit">
    <text evidence="1">The 4 large subunits of the cytochrome b6-f complex are cytochrome b6, subunit IV (17 kDa polypeptide, PetD), cytochrome f and the Rieske protein, while the 4 small subunits are PetG, PetL, PetM and PetN. The complex functions as a dimer.</text>
</comment>
<comment type="subcellular location">
    <subcellularLocation>
        <location evidence="1">Plastid</location>
        <location evidence="1">Chloroplast thylakoid membrane</location>
        <topology evidence="1">Single-pass membrane protein</topology>
    </subcellularLocation>
</comment>
<comment type="similarity">
    <text evidence="1">Belongs to the PetN family.</text>
</comment>
<reference key="1">
    <citation type="journal article" date="2002" name="Proc. Natl. Acad. Sci. U.S.A.">
        <title>The chloroplast and mitochondrial genome sequences of the charophyte Chaetosphaeridium globosum: insights into the timing of the events that restructured organelle DNAs within the green algal lineage that led to land plants.</title>
        <authorList>
            <person name="Turmel M."/>
            <person name="Otis C."/>
            <person name="Lemieux C."/>
        </authorList>
    </citation>
    <scope>NUCLEOTIDE SEQUENCE [LARGE SCALE GENOMIC DNA]</scope>
    <source>
        <strain>M1311</strain>
    </source>
</reference>
<name>PETN_CHAGL</name>
<keyword id="KW-0150">Chloroplast</keyword>
<keyword id="KW-0249">Electron transport</keyword>
<keyword id="KW-0472">Membrane</keyword>
<keyword id="KW-0602">Photosynthesis</keyword>
<keyword id="KW-0934">Plastid</keyword>
<keyword id="KW-0793">Thylakoid</keyword>
<keyword id="KW-0812">Transmembrane</keyword>
<keyword id="KW-1133">Transmembrane helix</keyword>
<keyword id="KW-0813">Transport</keyword>
<protein>
    <recommendedName>
        <fullName evidence="1">Cytochrome b6-f complex subunit 8</fullName>
    </recommendedName>
    <alternativeName>
        <fullName evidence="1">Cytochrome b6-f complex subunit PetN</fullName>
    </alternativeName>
    <alternativeName>
        <fullName evidence="1">Cytochrome b6-f complex subunit VIII</fullName>
    </alternativeName>
</protein>
<sequence>MDLITITWASVMVAFTFSLSLVVWGRSGL</sequence>
<accession>Q8MA13</accession>
<dbReference type="EMBL" id="AF494278">
    <property type="protein sequence ID" value="AAM96531.1"/>
    <property type="molecule type" value="Genomic_DNA"/>
</dbReference>
<dbReference type="RefSeq" id="NP_683773.1">
    <property type="nucleotide sequence ID" value="NC_004115.1"/>
</dbReference>
<dbReference type="SMR" id="Q8MA13"/>
<dbReference type="GeneID" id="860687"/>
<dbReference type="GO" id="GO:0009535">
    <property type="term" value="C:chloroplast thylakoid membrane"/>
    <property type="evidence" value="ECO:0007669"/>
    <property type="project" value="UniProtKB-SubCell"/>
</dbReference>
<dbReference type="GO" id="GO:0009512">
    <property type="term" value="C:cytochrome b6f complex"/>
    <property type="evidence" value="ECO:0007669"/>
    <property type="project" value="InterPro"/>
</dbReference>
<dbReference type="GO" id="GO:0045158">
    <property type="term" value="F:electron transporter, transferring electrons within cytochrome b6/f complex of photosystem II activity"/>
    <property type="evidence" value="ECO:0007669"/>
    <property type="project" value="InterPro"/>
</dbReference>
<dbReference type="GO" id="GO:0017004">
    <property type="term" value="P:cytochrome complex assembly"/>
    <property type="evidence" value="ECO:0007669"/>
    <property type="project" value="UniProtKB-UniRule"/>
</dbReference>
<dbReference type="GO" id="GO:0015979">
    <property type="term" value="P:photosynthesis"/>
    <property type="evidence" value="ECO:0007669"/>
    <property type="project" value="UniProtKB-KW"/>
</dbReference>
<dbReference type="HAMAP" id="MF_00395">
    <property type="entry name" value="Cytb6_f_PetN"/>
    <property type="match status" value="1"/>
</dbReference>
<dbReference type="InterPro" id="IPR036143">
    <property type="entry name" value="Cytochr_b6-f_cplx_su8_sf"/>
</dbReference>
<dbReference type="InterPro" id="IPR005497">
    <property type="entry name" value="Cytochrome_b6-f_cplx_su8"/>
</dbReference>
<dbReference type="Pfam" id="PF03742">
    <property type="entry name" value="PetN"/>
    <property type="match status" value="1"/>
</dbReference>
<dbReference type="SUPFAM" id="SSF103451">
    <property type="entry name" value="PetN subunit of the cytochrome b6f complex"/>
    <property type="match status" value="1"/>
</dbReference>
<organism>
    <name type="scientific">Chaetosphaeridium globosum</name>
    <name type="common">Charophycean green alga</name>
    <name type="synonym">Herposteiron globosum</name>
    <dbReference type="NCBI Taxonomy" id="96477"/>
    <lineage>
        <taxon>Eukaryota</taxon>
        <taxon>Viridiplantae</taxon>
        <taxon>Streptophyta</taxon>
        <taxon>Coleochaetophyceae</taxon>
        <taxon>Coleochaetales</taxon>
        <taxon>Chaetosphaeridiaceae</taxon>
        <taxon>Chaetosphaeridium</taxon>
    </lineage>
</organism>
<evidence type="ECO:0000255" key="1">
    <source>
        <dbReference type="HAMAP-Rule" id="MF_00395"/>
    </source>
</evidence>
<proteinExistence type="inferred from homology"/>
<gene>
    <name evidence="1" type="primary">petN</name>
</gene>
<feature type="chain" id="PRO_0000217103" description="Cytochrome b6-f complex subunit 8">
    <location>
        <begin position="1"/>
        <end position="29"/>
    </location>
</feature>
<feature type="transmembrane region" description="Helical" evidence="1">
    <location>
        <begin position="3"/>
        <end position="23"/>
    </location>
</feature>
<geneLocation type="chloroplast"/>